<sequence length="320" mass="35727">MGEQQQQVERQPDLPPGFRFHPTDEEIITFYLAPKVVDSRGFCVAAIGEVDLNKCEPWDLPGKAKMNGEKEWYFYCQKDRKYPTGMRTNRATEAGYWKATGKDKEIFRDHHMLIGMKKTLVFYKGRAPKGDKTNWVMHEYRLADASPPPPPSSAEPPRQDDWAVCRIFHKSSGIKKPVPVAPHQVPAAANYQQQQQMAMASAGIIQVPMQMQMPSMSDQLQMLDDFSTTASLSLMAPPSYSTLPAGFPLQINSGAHPQQFVGNPSMYYHQQQQMDMAGGGFVVSEPSSLVVSPQDAADQNNNAADISSMACNMDAAIWKY</sequence>
<proteinExistence type="evidence at protein level"/>
<dbReference type="EMBL" id="GU120353">
    <property type="protein sequence ID" value="ADR66987.1"/>
    <property type="molecule type" value="mRNA"/>
</dbReference>
<dbReference type="EMBL" id="JN944365">
    <property type="protein sequence ID" value="AFI71276.1"/>
    <property type="molecule type" value="mRNA"/>
</dbReference>
<dbReference type="EMBL" id="AP002818">
    <property type="protein sequence ID" value="BAB16335.1"/>
    <property type="molecule type" value="Genomic_DNA"/>
</dbReference>
<dbReference type="EMBL" id="AP008207">
    <property type="protein sequence ID" value="BAF03679.1"/>
    <property type="molecule type" value="Genomic_DNA"/>
</dbReference>
<dbReference type="EMBL" id="AP014957">
    <property type="protein sequence ID" value="BAS69958.1"/>
    <property type="molecule type" value="Genomic_DNA"/>
</dbReference>
<dbReference type="EMBL" id="CM000138">
    <property type="protein sequence ID" value="EAZ10206.1"/>
    <property type="molecule type" value="Genomic_DNA"/>
</dbReference>
<dbReference type="EMBL" id="AK242268">
    <property type="protein sequence ID" value="BAH01242.1"/>
    <property type="molecule type" value="mRNA"/>
</dbReference>
<dbReference type="SMR" id="Q9FTY0"/>
<dbReference type="FunCoup" id="Q9FTY0">
    <property type="interactions" value="3"/>
</dbReference>
<dbReference type="STRING" id="39947.Q9FTY0"/>
<dbReference type="PaxDb" id="39947-Q9FTY0"/>
<dbReference type="EnsemblPlants" id="Os01t0104500-01">
    <property type="protein sequence ID" value="Os01t0104500-01"/>
    <property type="gene ID" value="Os01g0104500"/>
</dbReference>
<dbReference type="Gramene" id="Os01t0104500-01">
    <property type="protein sequence ID" value="Os01t0104500-01"/>
    <property type="gene ID" value="Os01g0104500"/>
</dbReference>
<dbReference type="KEGG" id="dosa:Os01g0104500"/>
<dbReference type="KEGG" id="osa:4326295"/>
<dbReference type="eggNOG" id="ENOG502QSPY">
    <property type="taxonomic scope" value="Eukaryota"/>
</dbReference>
<dbReference type="HOGENOM" id="CLU_035664_6_0_1"/>
<dbReference type="InParanoid" id="Q9FTY0"/>
<dbReference type="OMA" id="LMAPPSY"/>
<dbReference type="OrthoDB" id="1424968at2759"/>
<dbReference type="Proteomes" id="UP000000763">
    <property type="component" value="Chromosome 1"/>
</dbReference>
<dbReference type="Proteomes" id="UP000007752">
    <property type="component" value="Chromosome 1"/>
</dbReference>
<dbReference type="Proteomes" id="UP000059680">
    <property type="component" value="Chromosome 1"/>
</dbReference>
<dbReference type="GO" id="GO:0005783">
    <property type="term" value="C:endoplasmic reticulum"/>
    <property type="evidence" value="ECO:0000314"/>
    <property type="project" value="UniProtKB"/>
</dbReference>
<dbReference type="GO" id="GO:0005634">
    <property type="term" value="C:nucleus"/>
    <property type="evidence" value="ECO:0000314"/>
    <property type="project" value="UniProtKB"/>
</dbReference>
<dbReference type="GO" id="GO:0003677">
    <property type="term" value="F:DNA binding"/>
    <property type="evidence" value="ECO:0007669"/>
    <property type="project" value="UniProtKB-KW"/>
</dbReference>
<dbReference type="GO" id="GO:0042803">
    <property type="term" value="F:protein homodimerization activity"/>
    <property type="evidence" value="ECO:0000314"/>
    <property type="project" value="UniProtKB"/>
</dbReference>
<dbReference type="GO" id="GO:0045893">
    <property type="term" value="P:positive regulation of DNA-templated transcription"/>
    <property type="evidence" value="ECO:0000314"/>
    <property type="project" value="UniProtKB"/>
</dbReference>
<dbReference type="GO" id="GO:2000014">
    <property type="term" value="P:regulation of endosperm development"/>
    <property type="evidence" value="ECO:0000315"/>
    <property type="project" value="UniProtKB"/>
</dbReference>
<dbReference type="FunFam" id="2.170.150.80:FF:000006">
    <property type="entry name" value="NAC domain-containing protein 100-like"/>
    <property type="match status" value="1"/>
</dbReference>
<dbReference type="Gene3D" id="2.170.150.80">
    <property type="entry name" value="NAC domain"/>
    <property type="match status" value="1"/>
</dbReference>
<dbReference type="InterPro" id="IPR003441">
    <property type="entry name" value="NAC-dom"/>
</dbReference>
<dbReference type="InterPro" id="IPR036093">
    <property type="entry name" value="NAC_dom_sf"/>
</dbReference>
<dbReference type="PANTHER" id="PTHR31744:SF92">
    <property type="entry name" value="NAC DOMAIN-CONTAINING PROTEIN 87"/>
    <property type="match status" value="1"/>
</dbReference>
<dbReference type="PANTHER" id="PTHR31744">
    <property type="entry name" value="PROTEIN CUP-SHAPED COTYLEDON 2-RELATED"/>
    <property type="match status" value="1"/>
</dbReference>
<dbReference type="Pfam" id="PF02365">
    <property type="entry name" value="NAM"/>
    <property type="match status" value="1"/>
</dbReference>
<dbReference type="SUPFAM" id="SSF101941">
    <property type="entry name" value="NAC domain"/>
    <property type="match status" value="1"/>
</dbReference>
<dbReference type="PROSITE" id="PS51005">
    <property type="entry name" value="NAC"/>
    <property type="match status" value="1"/>
</dbReference>
<comment type="function">
    <text evidence="3">Transcription factor that acts redundantly with NAC26 to regulate the expression of genes involved in the biosynthesis of starch and storage proteins in grain (PubMed:32989010). Directly binds to the promoters of starch synthase 1 (SS1), pullulanase (PUL), glutelin A1 (GLUA1), glutelins B4 and B5 (GLUB4 and GLUB5), alpha-globulin and 16 kDa prolamin, and activates their expression (PubMed:32989010).</text>
</comment>
<comment type="subunit">
    <text evidence="2 3">Forms homodimers (PubMed:32989010). Forms heterodimers with NAC26 (PubMed:27872632, PubMed:32989010).</text>
</comment>
<comment type="subcellular location">
    <subcellularLocation>
        <location evidence="1 3">Nucleus</location>
    </subcellularLocation>
    <subcellularLocation>
        <location evidence="2">Endoplasmic reticulum</location>
    </subcellularLocation>
</comment>
<comment type="tissue specificity">
    <text evidence="2 3">Expressed in developing seeds (PubMed:27872632). Expressed in developing endosperm (PubMed:32989010).</text>
</comment>
<comment type="domain">
    <text evidence="1">The NAC domain includes a DNA binding domain and a dimerization domain.</text>
</comment>
<comment type="disruption phenotype">
    <text evidence="3">No visible phenotype under normal growth conditions (PubMed:32989010). The double mutant nac20 and nac26 exhibit a floury grain phenotype due to decreased starch and storage protein content (PubMed:32989010).</text>
</comment>
<name>NAC20_ORYSJ</name>
<protein>
    <recommendedName>
        <fullName evidence="4">NAC domain-containing protein 20</fullName>
        <shortName evidence="4">ONAC020</shortName>
        <shortName evidence="5">OsNAC20</shortName>
    </recommendedName>
</protein>
<organism>
    <name type="scientific">Oryza sativa subsp. japonica</name>
    <name type="common">Rice</name>
    <dbReference type="NCBI Taxonomy" id="39947"/>
    <lineage>
        <taxon>Eukaryota</taxon>
        <taxon>Viridiplantae</taxon>
        <taxon>Streptophyta</taxon>
        <taxon>Embryophyta</taxon>
        <taxon>Tracheophyta</taxon>
        <taxon>Spermatophyta</taxon>
        <taxon>Magnoliopsida</taxon>
        <taxon>Liliopsida</taxon>
        <taxon>Poales</taxon>
        <taxon>Poaceae</taxon>
        <taxon>BOP clade</taxon>
        <taxon>Oryzoideae</taxon>
        <taxon>Oryzeae</taxon>
        <taxon>Oryzinae</taxon>
        <taxon>Oryza</taxon>
        <taxon>Oryza sativa</taxon>
    </lineage>
</organism>
<reference key="1">
    <citation type="journal article" date="2009" name="Sigmul Saengmyeong Gong Haghoeji">
        <title>Structural analysis of expressed sequence tags in immature seed of Oryza sativa L.</title>
        <authorList>
            <person name="Yoon U.H."/>
            <person name="Kim Y.H."/>
        </authorList>
    </citation>
    <scope>NUCLEOTIDE SEQUENCE [MRNA]</scope>
    <source>
        <tissue>Immature seed</tissue>
    </source>
</reference>
<reference key="2">
    <citation type="journal article" date="2002" name="Nature">
        <title>The genome sequence and structure of rice chromosome 1.</title>
        <authorList>
            <person name="Sasaki T."/>
            <person name="Matsumoto T."/>
            <person name="Yamamoto K."/>
            <person name="Sakata K."/>
            <person name="Baba T."/>
            <person name="Katayose Y."/>
            <person name="Wu J."/>
            <person name="Niimura Y."/>
            <person name="Cheng Z."/>
            <person name="Nagamura Y."/>
            <person name="Antonio B.A."/>
            <person name="Kanamori H."/>
            <person name="Hosokawa S."/>
            <person name="Masukawa M."/>
            <person name="Arikawa K."/>
            <person name="Chiden Y."/>
            <person name="Hayashi M."/>
            <person name="Okamoto M."/>
            <person name="Ando T."/>
            <person name="Aoki H."/>
            <person name="Arita K."/>
            <person name="Hamada M."/>
            <person name="Harada C."/>
            <person name="Hijishita S."/>
            <person name="Honda M."/>
            <person name="Ichikawa Y."/>
            <person name="Idonuma A."/>
            <person name="Iijima M."/>
            <person name="Ikeda M."/>
            <person name="Ikeno M."/>
            <person name="Ito S."/>
            <person name="Ito T."/>
            <person name="Ito Y."/>
            <person name="Ito Y."/>
            <person name="Iwabuchi A."/>
            <person name="Kamiya K."/>
            <person name="Karasawa W."/>
            <person name="Katagiri S."/>
            <person name="Kikuta A."/>
            <person name="Kobayashi N."/>
            <person name="Kono I."/>
            <person name="Machita K."/>
            <person name="Maehara T."/>
            <person name="Mizuno H."/>
            <person name="Mizubayashi T."/>
            <person name="Mukai Y."/>
            <person name="Nagasaki H."/>
            <person name="Nakashima M."/>
            <person name="Nakama Y."/>
            <person name="Nakamichi Y."/>
            <person name="Nakamura M."/>
            <person name="Namiki N."/>
            <person name="Negishi M."/>
            <person name="Ohta I."/>
            <person name="Ono N."/>
            <person name="Saji S."/>
            <person name="Sakai K."/>
            <person name="Shibata M."/>
            <person name="Shimokawa T."/>
            <person name="Shomura A."/>
            <person name="Song J."/>
            <person name="Takazaki Y."/>
            <person name="Terasawa K."/>
            <person name="Tsuji K."/>
            <person name="Waki K."/>
            <person name="Yamagata H."/>
            <person name="Yamane H."/>
            <person name="Yoshiki S."/>
            <person name="Yoshihara R."/>
            <person name="Yukawa K."/>
            <person name="Zhong H."/>
            <person name="Iwama H."/>
            <person name="Endo T."/>
            <person name="Ito H."/>
            <person name="Hahn J.H."/>
            <person name="Kim H.-I."/>
            <person name="Eun M.-Y."/>
            <person name="Yano M."/>
            <person name="Jiang J."/>
            <person name="Gojobori T."/>
        </authorList>
    </citation>
    <scope>NUCLEOTIDE SEQUENCE [LARGE SCALE GENOMIC DNA]</scope>
    <source>
        <strain>cv. Nipponbare</strain>
    </source>
</reference>
<reference key="3">
    <citation type="journal article" date="2005" name="Nature">
        <title>The map-based sequence of the rice genome.</title>
        <authorList>
            <consortium name="International rice genome sequencing project (IRGSP)"/>
        </authorList>
    </citation>
    <scope>NUCLEOTIDE SEQUENCE [LARGE SCALE GENOMIC DNA]</scope>
    <source>
        <strain>cv. Nipponbare</strain>
    </source>
</reference>
<reference key="4">
    <citation type="journal article" date="2008" name="Nucleic Acids Res.">
        <title>The rice annotation project database (RAP-DB): 2008 update.</title>
        <authorList>
            <consortium name="The rice annotation project (RAP)"/>
        </authorList>
    </citation>
    <scope>GENOME REANNOTATION</scope>
    <source>
        <strain>cv. Nipponbare</strain>
    </source>
</reference>
<reference key="5">
    <citation type="journal article" date="2013" name="Rice">
        <title>Improvement of the Oryza sativa Nipponbare reference genome using next generation sequence and optical map data.</title>
        <authorList>
            <person name="Kawahara Y."/>
            <person name="de la Bastide M."/>
            <person name="Hamilton J.P."/>
            <person name="Kanamori H."/>
            <person name="McCombie W.R."/>
            <person name="Ouyang S."/>
            <person name="Schwartz D.C."/>
            <person name="Tanaka T."/>
            <person name="Wu J."/>
            <person name="Zhou S."/>
            <person name="Childs K.L."/>
            <person name="Davidson R.M."/>
            <person name="Lin H."/>
            <person name="Quesada-Ocampo L."/>
            <person name="Vaillancourt B."/>
            <person name="Sakai H."/>
            <person name="Lee S.S."/>
            <person name="Kim J."/>
            <person name="Numa H."/>
            <person name="Itoh T."/>
            <person name="Buell C.R."/>
            <person name="Matsumoto T."/>
        </authorList>
    </citation>
    <scope>GENOME REANNOTATION</scope>
    <source>
        <strain>cv. Nipponbare</strain>
    </source>
</reference>
<reference key="6">
    <citation type="journal article" date="2005" name="PLoS Biol.">
        <title>The genomes of Oryza sativa: a history of duplications.</title>
        <authorList>
            <person name="Yu J."/>
            <person name="Wang J."/>
            <person name="Lin W."/>
            <person name="Li S."/>
            <person name="Li H."/>
            <person name="Zhou J."/>
            <person name="Ni P."/>
            <person name="Dong W."/>
            <person name="Hu S."/>
            <person name="Zeng C."/>
            <person name="Zhang J."/>
            <person name="Zhang Y."/>
            <person name="Li R."/>
            <person name="Xu Z."/>
            <person name="Li S."/>
            <person name="Li X."/>
            <person name="Zheng H."/>
            <person name="Cong L."/>
            <person name="Lin L."/>
            <person name="Yin J."/>
            <person name="Geng J."/>
            <person name="Li G."/>
            <person name="Shi J."/>
            <person name="Liu J."/>
            <person name="Lv H."/>
            <person name="Li J."/>
            <person name="Wang J."/>
            <person name="Deng Y."/>
            <person name="Ran L."/>
            <person name="Shi X."/>
            <person name="Wang X."/>
            <person name="Wu Q."/>
            <person name="Li C."/>
            <person name="Ren X."/>
            <person name="Wang J."/>
            <person name="Wang X."/>
            <person name="Li D."/>
            <person name="Liu D."/>
            <person name="Zhang X."/>
            <person name="Ji Z."/>
            <person name="Zhao W."/>
            <person name="Sun Y."/>
            <person name="Zhang Z."/>
            <person name="Bao J."/>
            <person name="Han Y."/>
            <person name="Dong L."/>
            <person name="Ji J."/>
            <person name="Chen P."/>
            <person name="Wu S."/>
            <person name="Liu J."/>
            <person name="Xiao Y."/>
            <person name="Bu D."/>
            <person name="Tan J."/>
            <person name="Yang L."/>
            <person name="Ye C."/>
            <person name="Zhang J."/>
            <person name="Xu J."/>
            <person name="Zhou Y."/>
            <person name="Yu Y."/>
            <person name="Zhang B."/>
            <person name="Zhuang S."/>
            <person name="Wei H."/>
            <person name="Liu B."/>
            <person name="Lei M."/>
            <person name="Yu H."/>
            <person name="Li Y."/>
            <person name="Xu H."/>
            <person name="Wei S."/>
            <person name="He X."/>
            <person name="Fang L."/>
            <person name="Zhang Z."/>
            <person name="Zhang Y."/>
            <person name="Huang X."/>
            <person name="Su Z."/>
            <person name="Tong W."/>
            <person name="Li J."/>
            <person name="Tong Z."/>
            <person name="Li S."/>
            <person name="Ye J."/>
            <person name="Wang L."/>
            <person name="Fang L."/>
            <person name="Lei T."/>
            <person name="Chen C.-S."/>
            <person name="Chen H.-C."/>
            <person name="Xu Z."/>
            <person name="Li H."/>
            <person name="Huang H."/>
            <person name="Zhang F."/>
            <person name="Xu H."/>
            <person name="Li N."/>
            <person name="Zhao C."/>
            <person name="Li S."/>
            <person name="Dong L."/>
            <person name="Huang Y."/>
            <person name="Li L."/>
            <person name="Xi Y."/>
            <person name="Qi Q."/>
            <person name="Li W."/>
            <person name="Zhang B."/>
            <person name="Hu W."/>
            <person name="Zhang Y."/>
            <person name="Tian X."/>
            <person name="Jiao Y."/>
            <person name="Liang X."/>
            <person name="Jin J."/>
            <person name="Gao L."/>
            <person name="Zheng W."/>
            <person name="Hao B."/>
            <person name="Liu S.-M."/>
            <person name="Wang W."/>
            <person name="Yuan L."/>
            <person name="Cao M."/>
            <person name="McDermott J."/>
            <person name="Samudrala R."/>
            <person name="Wang J."/>
            <person name="Wong G.K.-S."/>
            <person name="Yang H."/>
        </authorList>
    </citation>
    <scope>NUCLEOTIDE SEQUENCE [LARGE SCALE GENOMIC DNA]</scope>
    <source>
        <strain>cv. Nipponbare</strain>
    </source>
</reference>
<reference key="7">
    <citation type="submission" date="2006-10" db="EMBL/GenBank/DDBJ databases">
        <title>Oryza sativa full length cDNA.</title>
        <authorList>
            <consortium name="The rice full-length cDNA consortium"/>
        </authorList>
    </citation>
    <scope>NUCLEOTIDE SEQUENCE [LARGE SCALE MRNA]</scope>
    <source>
        <strain>cv. Nipponbare</strain>
    </source>
</reference>
<reference key="8">
    <citation type="journal article" date="2008" name="Mol. Genet. Genomics">
        <title>Systematic sequence analysis and identification of tissue-specific or stress-responsive genes of NAC transcription factor family in rice.</title>
        <authorList>
            <person name="Fang Y."/>
            <person name="You J."/>
            <person name="Xie K."/>
            <person name="Xie W."/>
            <person name="Xiong L."/>
        </authorList>
    </citation>
    <scope>GENE FAMILY</scope>
    <scope>NOMENCLATURE</scope>
</reference>
<reference key="9">
    <citation type="journal article" date="2016" name="Front. Plant Sci.">
        <title>Three rice NAC transcription factors heteromerize and are associated with seed size.</title>
        <authorList>
            <person name="Mathew I.E."/>
            <person name="Das S."/>
            <person name="Mahto A."/>
            <person name="Agarwal P."/>
        </authorList>
    </citation>
    <scope>INTERACTION WITH NAC26</scope>
    <scope>SUBCELLULAR LOCATION</scope>
    <scope>TISSUE SPECIFICITY</scope>
</reference>
<reference key="10">
    <citation type="journal article" date="2020" name="Plant Physiol.">
        <title>The NAC transcription factors OsNAC20 and OsNAC26 regulate starch and storage protein synthesis.</title>
        <authorList>
            <person name="Wang J."/>
            <person name="Chen Z."/>
            <person name="Zhang Q."/>
            <person name="Meng S."/>
            <person name="Wei C."/>
        </authorList>
    </citation>
    <scope>FUNCTION</scope>
    <scope>INTERACTION WITH NAC26</scope>
    <scope>SUBCELLULAR LOCATION</scope>
    <scope>TISSUE SPECIFICITY</scope>
    <scope>DISRUPTION PHENOTYPE</scope>
</reference>
<accession>Q9FTY0</accession>
<accession>A0A0P0UXL6</accession>
<keyword id="KW-0238">DNA-binding</keyword>
<keyword id="KW-0256">Endoplasmic reticulum</keyword>
<keyword id="KW-0539">Nucleus</keyword>
<keyword id="KW-1185">Reference proteome</keyword>
<keyword id="KW-0804">Transcription</keyword>
<keyword id="KW-0805">Transcription regulation</keyword>
<evidence type="ECO:0000255" key="1">
    <source>
        <dbReference type="PROSITE-ProRule" id="PRU00353"/>
    </source>
</evidence>
<evidence type="ECO:0000269" key="2">
    <source>
    </source>
</evidence>
<evidence type="ECO:0000269" key="3">
    <source>
    </source>
</evidence>
<evidence type="ECO:0000303" key="4">
    <source>
    </source>
</evidence>
<evidence type="ECO:0000303" key="5">
    <source>
    </source>
</evidence>
<evidence type="ECO:0000305" key="6"/>
<evidence type="ECO:0000312" key="7">
    <source>
        <dbReference type="EMBL" id="BAB16335.1"/>
    </source>
</evidence>
<evidence type="ECO:0000312" key="8">
    <source>
        <dbReference type="EMBL" id="BAS69958.1"/>
    </source>
</evidence>
<evidence type="ECO:0000312" key="9">
    <source>
        <dbReference type="EMBL" id="EAZ10206.1"/>
    </source>
</evidence>
<gene>
    <name evidence="4" type="primary">NAC20</name>
    <name evidence="6" type="synonym">DLN1</name>
    <name evidence="8" type="ordered locus">Os01g0104500</name>
    <name evidence="6" type="ordered locus">LOC_Os01g01470</name>
    <name evidence="9" type="ORF">OsJ_00037</name>
    <name evidence="7" type="ORF">P0436E04.23</name>
</gene>
<feature type="chain" id="PRO_0000452670" description="NAC domain-containing protein 20">
    <location>
        <begin position="1"/>
        <end position="320"/>
    </location>
</feature>
<feature type="domain" description="NAC" evidence="1">
    <location>
        <begin position="14"/>
        <end position="170"/>
    </location>
</feature>
<feature type="DNA-binding region" evidence="1">
    <location>
        <begin position="114"/>
        <end position="176"/>
    </location>
</feature>